<evidence type="ECO:0000250" key="1">
    <source>
        <dbReference type="UniProtKB" id="P03427"/>
    </source>
</evidence>
<evidence type="ECO:0000255" key="2">
    <source>
        <dbReference type="HAMAP-Rule" id="MF_04062"/>
    </source>
</evidence>
<reference key="1">
    <citation type="journal article" date="2006" name="Science">
        <title>Large-scale sequence analysis of avian influenza isolates.</title>
        <authorList>
            <person name="Obenauer J.C."/>
            <person name="Denson J."/>
            <person name="Mehta P.K."/>
            <person name="Su X."/>
            <person name="Mukatira S."/>
            <person name="Finkelstein D.B."/>
            <person name="Xu X."/>
            <person name="Wang J."/>
            <person name="Ma J."/>
            <person name="Fan Y."/>
            <person name="Rakestraw K.M."/>
            <person name="Webster R.G."/>
            <person name="Hoffmann E."/>
            <person name="Krauss S."/>
            <person name="Zheng J."/>
            <person name="Zhang Z."/>
            <person name="Naeve C.W."/>
        </authorList>
    </citation>
    <scope>NUCLEOTIDE SEQUENCE [GENOMIC RNA]</scope>
</reference>
<organism>
    <name type="scientific">Influenza A virus (strain A/Duck/Germany/1949 H10N7)</name>
    <dbReference type="NCBI Taxonomy" id="382838"/>
    <lineage>
        <taxon>Viruses</taxon>
        <taxon>Riboviria</taxon>
        <taxon>Orthornavirae</taxon>
        <taxon>Negarnaviricota</taxon>
        <taxon>Polyploviricotina</taxon>
        <taxon>Insthoviricetes</taxon>
        <taxon>Articulavirales</taxon>
        <taxon>Orthomyxoviridae</taxon>
        <taxon>Alphainfluenzavirus</taxon>
        <taxon>Alphainfluenzavirus influenzae</taxon>
        <taxon>Influenza A virus</taxon>
    </lineage>
</organism>
<dbReference type="EMBL" id="CY014678">
    <property type="protein sequence ID" value="ABI84544.1"/>
    <property type="molecule type" value="Genomic_RNA"/>
</dbReference>
<dbReference type="SMR" id="Q0A438"/>
<dbReference type="PRO" id="PR:Q0A438"/>
<dbReference type="Proteomes" id="UP000008217">
    <property type="component" value="Genome"/>
</dbReference>
<dbReference type="GO" id="GO:0033650">
    <property type="term" value="C:host cell mitochondrion"/>
    <property type="evidence" value="ECO:0007669"/>
    <property type="project" value="UniProtKB-SubCell"/>
</dbReference>
<dbReference type="GO" id="GO:0042025">
    <property type="term" value="C:host cell nucleus"/>
    <property type="evidence" value="ECO:0007669"/>
    <property type="project" value="UniProtKB-SubCell"/>
</dbReference>
<dbReference type="GO" id="GO:0044423">
    <property type="term" value="C:virion component"/>
    <property type="evidence" value="ECO:0007669"/>
    <property type="project" value="UniProtKB-UniRule"/>
</dbReference>
<dbReference type="GO" id="GO:0003723">
    <property type="term" value="F:RNA binding"/>
    <property type="evidence" value="ECO:0007669"/>
    <property type="project" value="UniProtKB-UniRule"/>
</dbReference>
<dbReference type="GO" id="GO:0003968">
    <property type="term" value="F:RNA-directed RNA polymerase activity"/>
    <property type="evidence" value="ECO:0007669"/>
    <property type="project" value="UniProtKB-UniRule"/>
</dbReference>
<dbReference type="GO" id="GO:0006370">
    <property type="term" value="P:7-methylguanosine mRNA capping"/>
    <property type="evidence" value="ECO:0007669"/>
    <property type="project" value="UniProtKB-UniRule"/>
</dbReference>
<dbReference type="GO" id="GO:0075526">
    <property type="term" value="P:cap snatching"/>
    <property type="evidence" value="ECO:0007669"/>
    <property type="project" value="UniProtKB-UniRule"/>
</dbReference>
<dbReference type="GO" id="GO:0006351">
    <property type="term" value="P:DNA-templated transcription"/>
    <property type="evidence" value="ECO:0007669"/>
    <property type="project" value="UniProtKB-UniRule"/>
</dbReference>
<dbReference type="GO" id="GO:0039545">
    <property type="term" value="P:symbiont-mediated suppression of host cytoplasmic pattern recognition receptor signaling pathway via inhibition of MAVS activity"/>
    <property type="evidence" value="ECO:0007669"/>
    <property type="project" value="UniProtKB-UniRule"/>
</dbReference>
<dbReference type="GO" id="GO:0039657">
    <property type="term" value="P:symbiont-mediated suppression of host gene expression"/>
    <property type="evidence" value="ECO:0007669"/>
    <property type="project" value="UniProtKB-KW"/>
</dbReference>
<dbReference type="GO" id="GO:0039523">
    <property type="term" value="P:symbiont-mediated suppression of host mRNA transcription via inhibition of RNA polymerase II activity"/>
    <property type="evidence" value="ECO:0007669"/>
    <property type="project" value="UniProtKB-UniRule"/>
</dbReference>
<dbReference type="GO" id="GO:0039694">
    <property type="term" value="P:viral RNA genome replication"/>
    <property type="evidence" value="ECO:0007669"/>
    <property type="project" value="InterPro"/>
</dbReference>
<dbReference type="FunFam" id="3.30.30.90:FF:000001">
    <property type="entry name" value="Polymerase basic protein 2"/>
    <property type="match status" value="1"/>
</dbReference>
<dbReference type="Gene3D" id="3.30.30.90">
    <property type="entry name" value="Polymerase Basic Protein 2, C-terminal domain"/>
    <property type="match status" value="1"/>
</dbReference>
<dbReference type="HAMAP" id="MF_04062">
    <property type="entry name" value="INV_PB2"/>
    <property type="match status" value="1"/>
</dbReference>
<dbReference type="InterPro" id="IPR049110">
    <property type="entry name" value="Flu_PB2_2nd"/>
</dbReference>
<dbReference type="InterPro" id="IPR049114">
    <property type="entry name" value="Flu_PB2_6th"/>
</dbReference>
<dbReference type="InterPro" id="IPR049115">
    <property type="entry name" value="Flu_PB2_C"/>
</dbReference>
<dbReference type="InterPro" id="IPR048298">
    <property type="entry name" value="Flu_PB2_CAP-bd"/>
</dbReference>
<dbReference type="InterPro" id="IPR049111">
    <property type="entry name" value="Flu_PB2_middle"/>
</dbReference>
<dbReference type="InterPro" id="IPR049106">
    <property type="entry name" value="Flu_PB2_N"/>
</dbReference>
<dbReference type="InterPro" id="IPR001591">
    <property type="entry name" value="INV_PB2"/>
</dbReference>
<dbReference type="InterPro" id="IPR049113">
    <property type="entry name" value="PB2_helical"/>
</dbReference>
<dbReference type="InterPro" id="IPR037258">
    <property type="entry name" value="PDB2_C"/>
</dbReference>
<dbReference type="Pfam" id="PF20947">
    <property type="entry name" value="Flu_PB2_1st"/>
    <property type="match status" value="1"/>
</dbReference>
<dbReference type="Pfam" id="PF20948">
    <property type="entry name" value="Flu_PB2_2nd"/>
    <property type="match status" value="1"/>
</dbReference>
<dbReference type="Pfam" id="PF20949">
    <property type="entry name" value="Flu_PB2_3rd"/>
    <property type="match status" value="1"/>
</dbReference>
<dbReference type="Pfam" id="PF20950">
    <property type="entry name" value="Flu_PB2_4th"/>
    <property type="match status" value="1"/>
</dbReference>
<dbReference type="Pfam" id="PF00604">
    <property type="entry name" value="Flu_PB2_5th"/>
    <property type="match status" value="1"/>
</dbReference>
<dbReference type="Pfam" id="PF20951">
    <property type="entry name" value="Flu_PB2_6th"/>
    <property type="match status" value="1"/>
</dbReference>
<dbReference type="Pfam" id="PF20952">
    <property type="entry name" value="Flu_PB2_7th"/>
    <property type="match status" value="1"/>
</dbReference>
<dbReference type="SUPFAM" id="SSF160453">
    <property type="entry name" value="PB2 C-terminal domain-like"/>
    <property type="match status" value="1"/>
</dbReference>
<protein>
    <recommendedName>
        <fullName evidence="2">Polymerase basic protein 2</fullName>
    </recommendedName>
    <alternativeName>
        <fullName evidence="2">RNA-directed RNA polymerase subunit P3</fullName>
    </alternativeName>
</protein>
<organismHost>
    <name type="scientific">Aves</name>
    <dbReference type="NCBI Taxonomy" id="8782"/>
</organismHost>
<feature type="chain" id="PRO_0000279628" description="Polymerase basic protein 2">
    <location>
        <begin position="1"/>
        <end position="759"/>
    </location>
</feature>
<feature type="short sequence motif" description="Nuclear localization signal" evidence="2">
    <location>
        <begin position="736"/>
        <end position="739"/>
    </location>
</feature>
<feature type="site" description="Mammalian adaptation" evidence="2">
    <location>
        <position position="627"/>
    </location>
</feature>
<name>PB2_I49A1</name>
<accession>Q0A438</accession>
<sequence>MERIKELRDLMSQSRTREILTKTTVDHMAIIKKYTSGRQEKNPALRMKWMMAMKYPITADKRIMEMIPERNEQGQTLWSKTNDAGSDRVMVSPLAVTWWNRNGPTTSTVHYPKVYKPYFEKVERLKHGTFGPVHFRNQVKIRRRVDINPGHADLSAKEAQDVIMEVVFPNEVGARILTSESQLTITKEKKEELQNCKIAPLMVAYMLERELVRKTRFLPVAGGTSSVYIEVLHLTQGTCWEQMYTPGGEVRNDDVDQSLIIAARNIVRRATVSADPLASLLEMCHSTQIGGIRMVDILRQNPTEEQAVDICKAAMGLRISSSFSFGGFTFKRTSGSSVKREEEVLTGNLQTLKIRVHEGYEEFTMVGRRATAILRKATRRLIQLIVSGRDEQSIAEAIIVAMVFSQEDCMIKAVRGDLNFVNRANQRLNPMHQLLRHFQKDAKVLFQNWGIEPIDNVMGMIGILPDMTPSTEMSLRGVRVSKMGVDEYSSTERVVVSIDRFLRVRDQRGNVLLSPEEVSETQGTEKLTITYSSSMMWEINGPESVLVNTYQWIIRNWETVKIQWSQDPTMLYNKMEFEPFQSLVPKAARGQYSGFVRTLFQQMRDVLGTFDTVQIIKLLPFAAAPPKQSRMQFSSLTVNVRGSGMRILVRGNSPVFNYNKATKRLTVLGKDAGALTEDPDEGTAGVESAVLRGFLILGKEDKRYGPALSINELSNLAKGEKANVLIGQGDVVLVMKRKRDSSILTDSQTATKRIRMAIN</sequence>
<proteinExistence type="inferred from homology"/>
<keyword id="KW-0025">Alternative splicing</keyword>
<keyword id="KW-1157">Cap snatching</keyword>
<keyword id="KW-1262">Eukaryotic host gene expression shutoff by virus</keyword>
<keyword id="KW-1191">Eukaryotic host transcription shutoff by virus</keyword>
<keyword id="KW-1190">Host gene expression shutoff by virus</keyword>
<keyword id="KW-1045">Host mitochondrion</keyword>
<keyword id="KW-1048">Host nucleus</keyword>
<keyword id="KW-0945">Host-virus interaction</keyword>
<keyword id="KW-1090">Inhibition of host innate immune response by virus</keyword>
<keyword id="KW-1097">Inhibition of host MAVS by virus</keyword>
<keyword id="KW-1113">Inhibition of host RLR pathway by virus</keyword>
<keyword id="KW-1104">Inhibition of host RNA polymerase II by virus</keyword>
<keyword id="KW-0506">mRNA capping</keyword>
<keyword id="KW-0507">mRNA processing</keyword>
<keyword id="KW-0899">Viral immunoevasion</keyword>
<keyword id="KW-1195">Viral transcription</keyword>
<keyword id="KW-0946">Virion</keyword>
<gene>
    <name evidence="2" type="primary">PB2</name>
</gene>
<comment type="function">
    <text evidence="2">Plays an essential role in transcription initiation and cap-stealing mechanism, in which cellular capped pre-mRNAs are used to generate primers for viral transcription. Recognizes and binds the 7-methylguanosine-containing cap of the target pre-RNA which is subsequently cleaved after 10-13 nucleotides by the viral protein PA. Plays a role in the initiation of the viral genome replication and modulates the activity of the ribonucleoprotein (RNP) complex. In addition, participates in the inhibition of type I interferon induction through interaction with and inhibition of the host mitochondrial antiviral signaling protein MAVS.</text>
</comment>
<comment type="subunit">
    <text evidence="2">Influenza RNA polymerase is composed of three subunits: PB1, PB2 and PA. Interacts (via N-terminus) with PB1 (via C-terminus). Interacts with nucleoprotein NP (via N-terminus). Interacts (via N-terminus) with host MAVS (via N-terminus); this interaction inhibits host innate immune response.</text>
</comment>
<comment type="subcellular location">
    <subcellularLocation>
        <location evidence="2">Virion</location>
    </subcellularLocation>
    <subcellularLocation>
        <location evidence="2">Host nucleus</location>
    </subcellularLocation>
    <subcellularLocation>
        <location evidence="2">Host mitochondrion</location>
    </subcellularLocation>
</comment>
<comment type="alternative products">
    <event type="alternative splicing"/>
    <isoform>
        <id>Q0A438-1</id>
        <name>Polymerase basic protein 2</name>
        <sequence type="displayed"/>
    </isoform>
    <isoform>
        <id>P0DOG4-1</id>
        <name evidence="1">PB2-S1</name>
        <sequence type="external"/>
    </isoform>
</comment>
<comment type="similarity">
    <text evidence="2">Belongs to the influenza viruses PB2 family.</text>
</comment>